<accession>Q1BHG8</accession>
<dbReference type="EC" id="3.1.26.4" evidence="1"/>
<dbReference type="EMBL" id="CP000380">
    <property type="protein sequence ID" value="ABF80937.1"/>
    <property type="molecule type" value="Genomic_DNA"/>
</dbReference>
<dbReference type="SMR" id="Q1BHG8"/>
<dbReference type="HOGENOM" id="CLU_036532_3_2_4"/>
<dbReference type="GO" id="GO:0005737">
    <property type="term" value="C:cytoplasm"/>
    <property type="evidence" value="ECO:0007669"/>
    <property type="project" value="UniProtKB-SubCell"/>
</dbReference>
<dbReference type="GO" id="GO:0032299">
    <property type="term" value="C:ribonuclease H2 complex"/>
    <property type="evidence" value="ECO:0007669"/>
    <property type="project" value="TreeGrafter"/>
</dbReference>
<dbReference type="GO" id="GO:0030145">
    <property type="term" value="F:manganese ion binding"/>
    <property type="evidence" value="ECO:0007669"/>
    <property type="project" value="UniProtKB-UniRule"/>
</dbReference>
<dbReference type="GO" id="GO:0003723">
    <property type="term" value="F:RNA binding"/>
    <property type="evidence" value="ECO:0007669"/>
    <property type="project" value="InterPro"/>
</dbReference>
<dbReference type="GO" id="GO:0004523">
    <property type="term" value="F:RNA-DNA hybrid ribonuclease activity"/>
    <property type="evidence" value="ECO:0007669"/>
    <property type="project" value="UniProtKB-UniRule"/>
</dbReference>
<dbReference type="GO" id="GO:0043137">
    <property type="term" value="P:DNA replication, removal of RNA primer"/>
    <property type="evidence" value="ECO:0007669"/>
    <property type="project" value="TreeGrafter"/>
</dbReference>
<dbReference type="GO" id="GO:0006298">
    <property type="term" value="P:mismatch repair"/>
    <property type="evidence" value="ECO:0007669"/>
    <property type="project" value="TreeGrafter"/>
</dbReference>
<dbReference type="CDD" id="cd07182">
    <property type="entry name" value="RNase_HII_bacteria_HII_like"/>
    <property type="match status" value="1"/>
</dbReference>
<dbReference type="FunFam" id="3.30.420.10:FF:000006">
    <property type="entry name" value="Ribonuclease HII"/>
    <property type="match status" value="1"/>
</dbReference>
<dbReference type="Gene3D" id="3.30.420.10">
    <property type="entry name" value="Ribonuclease H-like superfamily/Ribonuclease H"/>
    <property type="match status" value="1"/>
</dbReference>
<dbReference type="HAMAP" id="MF_00052_B">
    <property type="entry name" value="RNase_HII_B"/>
    <property type="match status" value="1"/>
</dbReference>
<dbReference type="InterPro" id="IPR022898">
    <property type="entry name" value="RNase_HII"/>
</dbReference>
<dbReference type="InterPro" id="IPR001352">
    <property type="entry name" value="RNase_HII/HIII"/>
</dbReference>
<dbReference type="InterPro" id="IPR024567">
    <property type="entry name" value="RNase_HII/HIII_dom"/>
</dbReference>
<dbReference type="InterPro" id="IPR012337">
    <property type="entry name" value="RNaseH-like_sf"/>
</dbReference>
<dbReference type="InterPro" id="IPR036397">
    <property type="entry name" value="RNaseH_sf"/>
</dbReference>
<dbReference type="NCBIfam" id="NF000595">
    <property type="entry name" value="PRK00015.1-3"/>
    <property type="match status" value="1"/>
</dbReference>
<dbReference type="NCBIfam" id="NF000596">
    <property type="entry name" value="PRK00015.1-4"/>
    <property type="match status" value="1"/>
</dbReference>
<dbReference type="PANTHER" id="PTHR10954">
    <property type="entry name" value="RIBONUCLEASE H2 SUBUNIT A"/>
    <property type="match status" value="1"/>
</dbReference>
<dbReference type="PANTHER" id="PTHR10954:SF18">
    <property type="entry name" value="RIBONUCLEASE HII"/>
    <property type="match status" value="1"/>
</dbReference>
<dbReference type="Pfam" id="PF01351">
    <property type="entry name" value="RNase_HII"/>
    <property type="match status" value="1"/>
</dbReference>
<dbReference type="SUPFAM" id="SSF53098">
    <property type="entry name" value="Ribonuclease H-like"/>
    <property type="match status" value="1"/>
</dbReference>
<dbReference type="PROSITE" id="PS51975">
    <property type="entry name" value="RNASE_H_2"/>
    <property type="match status" value="1"/>
</dbReference>
<reference key="1">
    <citation type="submission" date="2006-05" db="EMBL/GenBank/DDBJ databases">
        <title>Complete sequence of chromosome 3 of Burkholderia cenocepacia AU 1054.</title>
        <authorList>
            <consortium name="US DOE Joint Genome Institute"/>
            <person name="Copeland A."/>
            <person name="Lucas S."/>
            <person name="Lapidus A."/>
            <person name="Barry K."/>
            <person name="Detter J.C."/>
            <person name="Glavina del Rio T."/>
            <person name="Hammon N."/>
            <person name="Israni S."/>
            <person name="Dalin E."/>
            <person name="Tice H."/>
            <person name="Pitluck S."/>
            <person name="Chain P."/>
            <person name="Malfatti S."/>
            <person name="Shin M."/>
            <person name="Vergez L."/>
            <person name="Schmutz J."/>
            <person name="Larimer F."/>
            <person name="Land M."/>
            <person name="Hauser L."/>
            <person name="Kyrpides N."/>
            <person name="Lykidis A."/>
            <person name="LiPuma J.J."/>
            <person name="Konstantinidis K."/>
            <person name="Tiedje J.M."/>
            <person name="Richardson P."/>
        </authorList>
    </citation>
    <scope>NUCLEOTIDE SEQUENCE [LARGE SCALE GENOMIC DNA]</scope>
    <source>
        <strain>AU 1054</strain>
    </source>
</reference>
<organism>
    <name type="scientific">Burkholderia orbicola (strain AU 1054)</name>
    <dbReference type="NCBI Taxonomy" id="331271"/>
    <lineage>
        <taxon>Bacteria</taxon>
        <taxon>Pseudomonadati</taxon>
        <taxon>Pseudomonadota</taxon>
        <taxon>Betaproteobacteria</taxon>
        <taxon>Burkholderiales</taxon>
        <taxon>Burkholderiaceae</taxon>
        <taxon>Burkholderia</taxon>
        <taxon>Burkholderia cepacia complex</taxon>
        <taxon>Burkholderia orbicola</taxon>
    </lineage>
</organism>
<sequence length="214" mass="22827">MTAIRAPRRRASSDVQGGFDFSRPDEIVCGVDEAGRGPLAGPVVAAAVILDPAQPIDGLDDSKVLSAKKRDALYDLIVTRSHAYCVASASVDEIDTLNILHATMLAMKRAVEGLSVLPTLAQIDGNRCPTLSVRAEAIVSGDALVPSISAASILAKVTRDRMLVDLHERFPVYGFNVHAGYGTAKHLAALREHGPCEAHRRSFAPVRAALDLIR</sequence>
<gene>
    <name evidence="1" type="primary">rnhB</name>
    <name type="ordered locus">Bcen_6072</name>
</gene>
<feature type="chain" id="PRO_1000031121" description="Ribonuclease HII">
    <location>
        <begin position="1"/>
        <end position="214"/>
    </location>
</feature>
<feature type="domain" description="RNase H type-2" evidence="2">
    <location>
        <begin position="26"/>
        <end position="214"/>
    </location>
</feature>
<feature type="binding site" evidence="1">
    <location>
        <position position="32"/>
    </location>
    <ligand>
        <name>a divalent metal cation</name>
        <dbReference type="ChEBI" id="CHEBI:60240"/>
    </ligand>
</feature>
<feature type="binding site" evidence="1">
    <location>
        <position position="33"/>
    </location>
    <ligand>
        <name>a divalent metal cation</name>
        <dbReference type="ChEBI" id="CHEBI:60240"/>
    </ligand>
</feature>
<feature type="binding site" evidence="1">
    <location>
        <position position="124"/>
    </location>
    <ligand>
        <name>a divalent metal cation</name>
        <dbReference type="ChEBI" id="CHEBI:60240"/>
    </ligand>
</feature>
<protein>
    <recommendedName>
        <fullName evidence="1">Ribonuclease HII</fullName>
        <shortName evidence="1">RNase HII</shortName>
        <ecNumber evidence="1">3.1.26.4</ecNumber>
    </recommendedName>
</protein>
<evidence type="ECO:0000255" key="1">
    <source>
        <dbReference type="HAMAP-Rule" id="MF_00052"/>
    </source>
</evidence>
<evidence type="ECO:0000255" key="2">
    <source>
        <dbReference type="PROSITE-ProRule" id="PRU01319"/>
    </source>
</evidence>
<proteinExistence type="inferred from homology"/>
<comment type="function">
    <text evidence="1">Endonuclease that specifically degrades the RNA of RNA-DNA hybrids.</text>
</comment>
<comment type="catalytic activity">
    <reaction evidence="1">
        <text>Endonucleolytic cleavage to 5'-phosphomonoester.</text>
        <dbReference type="EC" id="3.1.26.4"/>
    </reaction>
</comment>
<comment type="cofactor">
    <cofactor evidence="1">
        <name>Mn(2+)</name>
        <dbReference type="ChEBI" id="CHEBI:29035"/>
    </cofactor>
    <cofactor evidence="1">
        <name>Mg(2+)</name>
        <dbReference type="ChEBI" id="CHEBI:18420"/>
    </cofactor>
    <text evidence="1">Manganese or magnesium. Binds 1 divalent metal ion per monomer in the absence of substrate. May bind a second metal ion after substrate binding.</text>
</comment>
<comment type="subcellular location">
    <subcellularLocation>
        <location evidence="1">Cytoplasm</location>
    </subcellularLocation>
</comment>
<comment type="similarity">
    <text evidence="1">Belongs to the RNase HII family.</text>
</comment>
<name>RNH2_BURO1</name>
<keyword id="KW-0963">Cytoplasm</keyword>
<keyword id="KW-0255">Endonuclease</keyword>
<keyword id="KW-0378">Hydrolase</keyword>
<keyword id="KW-0464">Manganese</keyword>
<keyword id="KW-0479">Metal-binding</keyword>
<keyword id="KW-0540">Nuclease</keyword>